<organism>
    <name type="scientific">Escherichia coli O45:K1 (strain S88 / ExPEC)</name>
    <dbReference type="NCBI Taxonomy" id="585035"/>
    <lineage>
        <taxon>Bacteria</taxon>
        <taxon>Pseudomonadati</taxon>
        <taxon>Pseudomonadota</taxon>
        <taxon>Gammaproteobacteria</taxon>
        <taxon>Enterobacterales</taxon>
        <taxon>Enterobacteriaceae</taxon>
        <taxon>Escherichia</taxon>
    </lineage>
</organism>
<gene>
    <name evidence="1" type="primary">xni</name>
    <name evidence="1" type="synonym">ygdG</name>
    <name type="ordered locus">ECS88_3067</name>
</gene>
<name>XNI_ECO45</name>
<evidence type="ECO:0000255" key="1">
    <source>
        <dbReference type="HAMAP-Rule" id="MF_01192"/>
    </source>
</evidence>
<evidence type="ECO:0000305" key="2"/>
<sequence>MAVHLLIVDALNLIRRIHAVQGSPCVETCQHALDQLIMHSQPTHAVAVFDDENRSSGWRHQRLPDYKAGRPPMPEELHNEMPALRAAFEQRGVPCWSASGNEADDLAATLAVKVTQAGHQATIVSTDKGYCQLLSPTLRIRDYFQKRWLDAPFIDKEFGVQPQQLPDYWGLAGISSSKVPGVAGIGPKSATQLLVEFQSLEGIYENLDAVAEKWRKKLETHKEMAFLCRDIARLQTDLHIDGNLQQLRLVR</sequence>
<protein>
    <recommendedName>
        <fullName evidence="1">Flap endonuclease Xni</fullName>
        <shortName evidence="1">FEN</shortName>
        <ecNumber evidence="1">3.1.-.-</ecNumber>
    </recommendedName>
</protein>
<dbReference type="EC" id="3.1.-.-" evidence="1"/>
<dbReference type="EMBL" id="CU928161">
    <property type="protein sequence ID" value="CAR04308.1"/>
    <property type="status" value="ALT_INIT"/>
    <property type="molecule type" value="Genomic_DNA"/>
</dbReference>
<dbReference type="RefSeq" id="WP_001296330.1">
    <property type="nucleotide sequence ID" value="NC_011742.1"/>
</dbReference>
<dbReference type="SMR" id="B7MLB9"/>
<dbReference type="KEGG" id="ecz:ECS88_3067"/>
<dbReference type="HOGENOM" id="CLU_004675_1_2_6"/>
<dbReference type="Proteomes" id="UP000000747">
    <property type="component" value="Chromosome"/>
</dbReference>
<dbReference type="GO" id="GO:0008409">
    <property type="term" value="F:5'-3' exonuclease activity"/>
    <property type="evidence" value="ECO:0007669"/>
    <property type="project" value="InterPro"/>
</dbReference>
<dbReference type="GO" id="GO:0017108">
    <property type="term" value="F:5'-flap endonuclease activity"/>
    <property type="evidence" value="ECO:0007669"/>
    <property type="project" value="UniProtKB-UniRule"/>
</dbReference>
<dbReference type="GO" id="GO:0003677">
    <property type="term" value="F:DNA binding"/>
    <property type="evidence" value="ECO:0007669"/>
    <property type="project" value="UniProtKB-UniRule"/>
</dbReference>
<dbReference type="GO" id="GO:0000287">
    <property type="term" value="F:magnesium ion binding"/>
    <property type="evidence" value="ECO:0007669"/>
    <property type="project" value="UniProtKB-UniRule"/>
</dbReference>
<dbReference type="GO" id="GO:0030955">
    <property type="term" value="F:potassium ion binding"/>
    <property type="evidence" value="ECO:0007669"/>
    <property type="project" value="UniProtKB-UniRule"/>
</dbReference>
<dbReference type="GO" id="GO:0033567">
    <property type="term" value="P:DNA replication, Okazaki fragment processing"/>
    <property type="evidence" value="ECO:0007669"/>
    <property type="project" value="UniProtKB-UniRule"/>
</dbReference>
<dbReference type="CDD" id="cd09898">
    <property type="entry name" value="H3TH_53EXO"/>
    <property type="match status" value="1"/>
</dbReference>
<dbReference type="CDD" id="cd09859">
    <property type="entry name" value="PIN_53EXO"/>
    <property type="match status" value="1"/>
</dbReference>
<dbReference type="FunFam" id="1.10.150.20:FF:000003">
    <property type="entry name" value="DNA polymerase I"/>
    <property type="match status" value="1"/>
</dbReference>
<dbReference type="FunFam" id="3.40.50.1010:FF:000011">
    <property type="entry name" value="Flap endonuclease Xni"/>
    <property type="match status" value="1"/>
</dbReference>
<dbReference type="Gene3D" id="1.10.150.20">
    <property type="entry name" value="5' to 3' exonuclease, C-terminal subdomain"/>
    <property type="match status" value="1"/>
</dbReference>
<dbReference type="Gene3D" id="3.40.50.1010">
    <property type="entry name" value="5'-nuclease"/>
    <property type="match status" value="1"/>
</dbReference>
<dbReference type="HAMAP" id="MF_01192">
    <property type="entry name" value="Xni"/>
    <property type="match status" value="1"/>
</dbReference>
<dbReference type="InterPro" id="IPR020046">
    <property type="entry name" value="5-3_exonucl_a-hlix_arch_N"/>
</dbReference>
<dbReference type="InterPro" id="IPR002421">
    <property type="entry name" value="5-3_exonuclease"/>
</dbReference>
<dbReference type="InterPro" id="IPR036279">
    <property type="entry name" value="5-3_exonuclease_C_sf"/>
</dbReference>
<dbReference type="InterPro" id="IPR020045">
    <property type="entry name" value="DNA_polI_H3TH"/>
</dbReference>
<dbReference type="InterPro" id="IPR038969">
    <property type="entry name" value="FEN"/>
</dbReference>
<dbReference type="InterPro" id="IPR008918">
    <property type="entry name" value="HhH2"/>
</dbReference>
<dbReference type="InterPro" id="IPR029060">
    <property type="entry name" value="PIN-like_dom_sf"/>
</dbReference>
<dbReference type="InterPro" id="IPR022895">
    <property type="entry name" value="Xni"/>
</dbReference>
<dbReference type="NCBIfam" id="NF007017">
    <property type="entry name" value="PRK09482.1"/>
    <property type="match status" value="1"/>
</dbReference>
<dbReference type="PANTHER" id="PTHR42646:SF2">
    <property type="entry name" value="5'-3' EXONUCLEASE FAMILY PROTEIN"/>
    <property type="match status" value="1"/>
</dbReference>
<dbReference type="PANTHER" id="PTHR42646">
    <property type="entry name" value="FLAP ENDONUCLEASE XNI"/>
    <property type="match status" value="1"/>
</dbReference>
<dbReference type="Pfam" id="PF01367">
    <property type="entry name" value="5_3_exonuc"/>
    <property type="match status" value="1"/>
</dbReference>
<dbReference type="Pfam" id="PF02739">
    <property type="entry name" value="5_3_exonuc_N"/>
    <property type="match status" value="1"/>
</dbReference>
<dbReference type="SMART" id="SM00475">
    <property type="entry name" value="53EXOc"/>
    <property type="match status" value="1"/>
</dbReference>
<dbReference type="SMART" id="SM00279">
    <property type="entry name" value="HhH2"/>
    <property type="match status" value="1"/>
</dbReference>
<dbReference type="SUPFAM" id="SSF47807">
    <property type="entry name" value="5' to 3' exonuclease, C-terminal subdomain"/>
    <property type="match status" value="1"/>
</dbReference>
<dbReference type="SUPFAM" id="SSF88723">
    <property type="entry name" value="PIN domain-like"/>
    <property type="match status" value="1"/>
</dbReference>
<reference key="1">
    <citation type="journal article" date="2009" name="PLoS Genet.">
        <title>Organised genome dynamics in the Escherichia coli species results in highly diverse adaptive paths.</title>
        <authorList>
            <person name="Touchon M."/>
            <person name="Hoede C."/>
            <person name="Tenaillon O."/>
            <person name="Barbe V."/>
            <person name="Baeriswyl S."/>
            <person name="Bidet P."/>
            <person name="Bingen E."/>
            <person name="Bonacorsi S."/>
            <person name="Bouchier C."/>
            <person name="Bouvet O."/>
            <person name="Calteau A."/>
            <person name="Chiapello H."/>
            <person name="Clermont O."/>
            <person name="Cruveiller S."/>
            <person name="Danchin A."/>
            <person name="Diard M."/>
            <person name="Dossat C."/>
            <person name="Karoui M.E."/>
            <person name="Frapy E."/>
            <person name="Garry L."/>
            <person name="Ghigo J.M."/>
            <person name="Gilles A.M."/>
            <person name="Johnson J."/>
            <person name="Le Bouguenec C."/>
            <person name="Lescat M."/>
            <person name="Mangenot S."/>
            <person name="Martinez-Jehanne V."/>
            <person name="Matic I."/>
            <person name="Nassif X."/>
            <person name="Oztas S."/>
            <person name="Petit M.A."/>
            <person name="Pichon C."/>
            <person name="Rouy Z."/>
            <person name="Ruf C.S."/>
            <person name="Schneider D."/>
            <person name="Tourret J."/>
            <person name="Vacherie B."/>
            <person name="Vallenet D."/>
            <person name="Medigue C."/>
            <person name="Rocha E.P.C."/>
            <person name="Denamur E."/>
        </authorList>
    </citation>
    <scope>NUCLEOTIDE SEQUENCE [LARGE SCALE GENOMIC DNA]</scope>
    <source>
        <strain>S88 / ExPEC</strain>
    </source>
</reference>
<keyword id="KW-0238">DNA-binding</keyword>
<keyword id="KW-0255">Endonuclease</keyword>
<keyword id="KW-0378">Hydrolase</keyword>
<keyword id="KW-0460">Magnesium</keyword>
<keyword id="KW-0479">Metal-binding</keyword>
<keyword id="KW-0540">Nuclease</keyword>
<keyword id="KW-0630">Potassium</keyword>
<keyword id="KW-1185">Reference proteome</keyword>
<proteinExistence type="inferred from homology"/>
<feature type="chain" id="PRO_1000138378" description="Flap endonuclease Xni">
    <location>
        <begin position="1"/>
        <end position="251"/>
    </location>
</feature>
<feature type="domain" description="5'-3' exonuclease" evidence="1">
    <location>
        <begin position="160"/>
        <end position="249"/>
    </location>
</feature>
<feature type="region of interest" description="Interaction with DNA" evidence="1">
    <location>
        <begin position="184"/>
        <end position="189"/>
    </location>
</feature>
<feature type="binding site" evidence="1">
    <location>
        <position position="104"/>
    </location>
    <ligand>
        <name>Mg(2+)</name>
        <dbReference type="ChEBI" id="CHEBI:18420"/>
    </ligand>
</feature>
<feature type="binding site" evidence="1">
    <location>
        <position position="171"/>
    </location>
    <ligand>
        <name>K(+)</name>
        <dbReference type="ChEBI" id="CHEBI:29103"/>
    </ligand>
</feature>
<feature type="binding site" evidence="1">
    <location>
        <position position="172"/>
    </location>
    <ligand>
        <name>K(+)</name>
        <dbReference type="ChEBI" id="CHEBI:29103"/>
    </ligand>
</feature>
<feature type="binding site" evidence="1">
    <location>
        <position position="180"/>
    </location>
    <ligand>
        <name>K(+)</name>
        <dbReference type="ChEBI" id="CHEBI:29103"/>
    </ligand>
</feature>
<feature type="binding site" evidence="1">
    <location>
        <position position="182"/>
    </location>
    <ligand>
        <name>K(+)</name>
        <dbReference type="ChEBI" id="CHEBI:29103"/>
    </ligand>
</feature>
<feature type="binding site" evidence="1">
    <location>
        <position position="185"/>
    </location>
    <ligand>
        <name>K(+)</name>
        <dbReference type="ChEBI" id="CHEBI:29103"/>
    </ligand>
</feature>
<comment type="function">
    <text evidence="1">Has flap endonuclease activity. During DNA replication, flap endonucleases cleave the 5'-overhanging flap structure that is generated by displacement synthesis when DNA polymerase encounters the 5'-end of a downstream Okazaki fragment.</text>
</comment>
<comment type="cofactor">
    <cofactor evidence="1">
        <name>Mg(2+)</name>
        <dbReference type="ChEBI" id="CHEBI:18420"/>
    </cofactor>
    <text evidence="1">Binds 2 Mg(2+) per subunit. Only one magnesium ion has a direct interaction with the protein, the other interactions are indirect.</text>
</comment>
<comment type="cofactor">
    <cofactor evidence="1">
        <name>K(+)</name>
        <dbReference type="ChEBI" id="CHEBI:29103"/>
    </cofactor>
    <text evidence="1">Binds 1 K(+) per subunit. The potassium ion strongly increases the affinity for DNA.</text>
</comment>
<comment type="similarity">
    <text evidence="1">Belongs to the Xni family.</text>
</comment>
<comment type="sequence caution" evidence="2">
    <conflict type="erroneous initiation">
        <sequence resource="EMBL-CDS" id="CAR04308"/>
    </conflict>
    <text>Extended N-terminus.</text>
</comment>
<accession>B7MLB9</accession>